<name>YABA_STAA2</name>
<sequence length="115" mass="12950">MDRNEIFEKIMRLEMNVNQLSKETSELKAHAVELVEENVALQLENDNLKKVLGNDEPTTIDTANSKPAKAVKKPLPSKDNLAILYGEGFHICKGELFGKHRHGEDCLFCLEVLSD</sequence>
<dbReference type="EMBL" id="CP000736">
    <property type="protein sequence ID" value="ABR51378.1"/>
    <property type="molecule type" value="Genomic_DNA"/>
</dbReference>
<dbReference type="SMR" id="A6TYW0"/>
<dbReference type="KEGG" id="sah:SaurJH1_0520"/>
<dbReference type="HOGENOM" id="CLU_157169_1_0_9"/>
<dbReference type="GO" id="GO:0009295">
    <property type="term" value="C:nucleoid"/>
    <property type="evidence" value="ECO:0007669"/>
    <property type="project" value="UniProtKB-SubCell"/>
</dbReference>
<dbReference type="GO" id="GO:0006260">
    <property type="term" value="P:DNA replication"/>
    <property type="evidence" value="ECO:0007669"/>
    <property type="project" value="UniProtKB-UniRule"/>
</dbReference>
<dbReference type="HAMAP" id="MF_01159">
    <property type="entry name" value="YabA"/>
    <property type="match status" value="1"/>
</dbReference>
<dbReference type="InterPro" id="IPR010377">
    <property type="entry name" value="YabA"/>
</dbReference>
<dbReference type="NCBIfam" id="NF009641">
    <property type="entry name" value="PRK13169.1-2"/>
    <property type="match status" value="1"/>
</dbReference>
<dbReference type="Pfam" id="PF06156">
    <property type="entry name" value="YabA"/>
    <property type="match status" value="1"/>
</dbReference>
<dbReference type="PIRSF" id="PIRSF021439">
    <property type="entry name" value="DUF972"/>
    <property type="match status" value="1"/>
</dbReference>
<comment type="function">
    <text evidence="1">Involved in control of chromosome replication initiation. Inhibits the cooperative binding of DnaA to the oriC region, thus negatively regulating initiation of chromosome replication. Inhibits the ability of DnaA-ATP to form a helix on DNA; does not disassemble preformed DnaA-DNA helices. Decreases the residence time of DnaA on the chromosome at its binding sites (oriC, replication forks and promoter-binding sites). Tethers DnaA to the replication machinery via the DNA polymerase beta sliding clamp subunit (dnaN). Associates with oriC and other DnaA targets on the chromosome in a DnaA-dependent manner.</text>
</comment>
<comment type="cofactor">
    <cofactor evidence="1">
        <name>Zn(2+)</name>
        <dbReference type="ChEBI" id="CHEBI:29105"/>
    </cofactor>
    <text evidence="1">Binds 1 zinc ion per subunit.</text>
</comment>
<comment type="subunit">
    <text evidence="1">Homotetramer. Interacts with both DnaA and DnaN, acting as a bridge between these two proteins.</text>
</comment>
<comment type="subcellular location">
    <subcellularLocation>
        <location evidence="1">Cytoplasm</location>
        <location evidence="1">Nucleoid</location>
    </subcellularLocation>
    <text evidence="1">Localizes in tight foci, which correspond to the replisome at mid-cell throughout the cell cycle.</text>
</comment>
<comment type="similarity">
    <text evidence="1">Belongs to the YabA family.</text>
</comment>
<feature type="chain" id="PRO_1000085357" description="Replication initiation control protein YabA">
    <location>
        <begin position="1"/>
        <end position="115"/>
    </location>
</feature>
<feature type="binding site" evidence="1">
    <location>
        <position position="90"/>
    </location>
    <ligand>
        <name>Zn(2+)</name>
        <dbReference type="ChEBI" id="CHEBI:29105"/>
    </ligand>
</feature>
<feature type="binding site" evidence="1">
    <location>
        <position position="92"/>
    </location>
    <ligand>
        <name>Zn(2+)</name>
        <dbReference type="ChEBI" id="CHEBI:29105"/>
    </ligand>
</feature>
<feature type="binding site" evidence="1">
    <location>
        <position position="106"/>
    </location>
    <ligand>
        <name>Zn(2+)</name>
        <dbReference type="ChEBI" id="CHEBI:29105"/>
    </ligand>
</feature>
<feature type="binding site" evidence="1">
    <location>
        <position position="109"/>
    </location>
    <ligand>
        <name>Zn(2+)</name>
        <dbReference type="ChEBI" id="CHEBI:29105"/>
    </ligand>
</feature>
<gene>
    <name evidence="1" type="primary">yabA</name>
    <name type="ordered locus">SaurJH1_0520</name>
</gene>
<accession>A6TYW0</accession>
<evidence type="ECO:0000255" key="1">
    <source>
        <dbReference type="HAMAP-Rule" id="MF_01159"/>
    </source>
</evidence>
<proteinExistence type="inferred from homology"/>
<reference key="1">
    <citation type="submission" date="2007-06" db="EMBL/GenBank/DDBJ databases">
        <title>Complete sequence of chromosome of Staphylococcus aureus subsp. aureus JH1.</title>
        <authorList>
            <consortium name="US DOE Joint Genome Institute"/>
            <person name="Copeland A."/>
            <person name="Lucas S."/>
            <person name="Lapidus A."/>
            <person name="Barry K."/>
            <person name="Detter J.C."/>
            <person name="Glavina del Rio T."/>
            <person name="Hammon N."/>
            <person name="Israni S."/>
            <person name="Dalin E."/>
            <person name="Tice H."/>
            <person name="Pitluck S."/>
            <person name="Chain P."/>
            <person name="Malfatti S."/>
            <person name="Shin M."/>
            <person name="Vergez L."/>
            <person name="Schmutz J."/>
            <person name="Larimer F."/>
            <person name="Land M."/>
            <person name="Hauser L."/>
            <person name="Kyrpides N."/>
            <person name="Ivanova N."/>
            <person name="Tomasz A."/>
            <person name="Richardson P."/>
        </authorList>
    </citation>
    <scope>NUCLEOTIDE SEQUENCE [LARGE SCALE GENOMIC DNA]</scope>
    <source>
        <strain>JH1</strain>
    </source>
</reference>
<organism>
    <name type="scientific">Staphylococcus aureus (strain JH1)</name>
    <dbReference type="NCBI Taxonomy" id="359787"/>
    <lineage>
        <taxon>Bacteria</taxon>
        <taxon>Bacillati</taxon>
        <taxon>Bacillota</taxon>
        <taxon>Bacilli</taxon>
        <taxon>Bacillales</taxon>
        <taxon>Staphylococcaceae</taxon>
        <taxon>Staphylococcus</taxon>
    </lineage>
</organism>
<protein>
    <recommendedName>
        <fullName evidence="1">Replication initiation control protein YabA</fullName>
    </recommendedName>
</protein>
<keyword id="KW-0963">Cytoplasm</keyword>
<keyword id="KW-0235">DNA replication</keyword>
<keyword id="KW-0236">DNA replication inhibitor</keyword>
<keyword id="KW-0479">Metal-binding</keyword>
<keyword id="KW-0862">Zinc</keyword>